<dbReference type="EC" id="1.3.1.98" evidence="2"/>
<dbReference type="EMBL" id="AE005174">
    <property type="protein sequence ID" value="AAG59172.1"/>
    <property type="molecule type" value="Genomic_DNA"/>
</dbReference>
<dbReference type="EMBL" id="BA000007">
    <property type="protein sequence ID" value="BAB38322.1"/>
    <property type="molecule type" value="Genomic_DNA"/>
</dbReference>
<dbReference type="PIR" id="C91241">
    <property type="entry name" value="C91241"/>
</dbReference>
<dbReference type="PIR" id="H86088">
    <property type="entry name" value="H86088"/>
</dbReference>
<dbReference type="RefSeq" id="NP_312926.1">
    <property type="nucleotide sequence ID" value="NC_002695.1"/>
</dbReference>
<dbReference type="RefSeq" id="WP_001016661.1">
    <property type="nucleotide sequence ID" value="NZ_VOAI01000072.1"/>
</dbReference>
<dbReference type="SMR" id="Q8X711"/>
<dbReference type="STRING" id="155864.Z5543"/>
<dbReference type="GeneID" id="914964"/>
<dbReference type="KEGG" id="ece:Z5543"/>
<dbReference type="KEGG" id="ecs:ECs_4899"/>
<dbReference type="PATRIC" id="fig|386585.9.peg.5123"/>
<dbReference type="eggNOG" id="COG0812">
    <property type="taxonomic scope" value="Bacteria"/>
</dbReference>
<dbReference type="HOGENOM" id="CLU_035304_0_0_6"/>
<dbReference type="OMA" id="APLTWFR"/>
<dbReference type="UniPathway" id="UPA00219"/>
<dbReference type="Proteomes" id="UP000000558">
    <property type="component" value="Chromosome"/>
</dbReference>
<dbReference type="Proteomes" id="UP000002519">
    <property type="component" value="Chromosome"/>
</dbReference>
<dbReference type="GO" id="GO:0005829">
    <property type="term" value="C:cytosol"/>
    <property type="evidence" value="ECO:0007669"/>
    <property type="project" value="TreeGrafter"/>
</dbReference>
<dbReference type="GO" id="GO:0071949">
    <property type="term" value="F:FAD binding"/>
    <property type="evidence" value="ECO:0007669"/>
    <property type="project" value="InterPro"/>
</dbReference>
<dbReference type="GO" id="GO:0008762">
    <property type="term" value="F:UDP-N-acetylmuramate dehydrogenase activity"/>
    <property type="evidence" value="ECO:0007669"/>
    <property type="project" value="UniProtKB-UniRule"/>
</dbReference>
<dbReference type="GO" id="GO:0051301">
    <property type="term" value="P:cell division"/>
    <property type="evidence" value="ECO:0007669"/>
    <property type="project" value="UniProtKB-KW"/>
</dbReference>
<dbReference type="GO" id="GO:0071555">
    <property type="term" value="P:cell wall organization"/>
    <property type="evidence" value="ECO:0007669"/>
    <property type="project" value="UniProtKB-KW"/>
</dbReference>
<dbReference type="GO" id="GO:0009252">
    <property type="term" value="P:peptidoglycan biosynthetic process"/>
    <property type="evidence" value="ECO:0007669"/>
    <property type="project" value="UniProtKB-UniRule"/>
</dbReference>
<dbReference type="GO" id="GO:0008360">
    <property type="term" value="P:regulation of cell shape"/>
    <property type="evidence" value="ECO:0007669"/>
    <property type="project" value="UniProtKB-KW"/>
</dbReference>
<dbReference type="FunFam" id="3.30.465.10:FF:000018">
    <property type="entry name" value="UDP-N-acetylenolpyruvoylglucosamine reductase"/>
    <property type="match status" value="1"/>
</dbReference>
<dbReference type="FunFam" id="3.90.78.10:FF:000002">
    <property type="entry name" value="UDP-N-acetylenolpyruvoylglucosamine reductase"/>
    <property type="match status" value="1"/>
</dbReference>
<dbReference type="Gene3D" id="3.30.465.10">
    <property type="match status" value="1"/>
</dbReference>
<dbReference type="Gene3D" id="3.90.78.10">
    <property type="entry name" value="UDP-N-acetylenolpyruvoylglucosamine reductase, C-terminal domain"/>
    <property type="match status" value="1"/>
</dbReference>
<dbReference type="Gene3D" id="3.30.43.10">
    <property type="entry name" value="Uridine Diphospho-n-acetylenolpyruvylglucosamine Reductase, domain 2"/>
    <property type="match status" value="1"/>
</dbReference>
<dbReference type="HAMAP" id="MF_00037">
    <property type="entry name" value="MurB"/>
    <property type="match status" value="1"/>
</dbReference>
<dbReference type="InterPro" id="IPR016166">
    <property type="entry name" value="FAD-bd_PCMH"/>
</dbReference>
<dbReference type="InterPro" id="IPR036318">
    <property type="entry name" value="FAD-bd_PCMH-like_sf"/>
</dbReference>
<dbReference type="InterPro" id="IPR016167">
    <property type="entry name" value="FAD-bd_PCMH_sub1"/>
</dbReference>
<dbReference type="InterPro" id="IPR016169">
    <property type="entry name" value="FAD-bd_PCMH_sub2"/>
</dbReference>
<dbReference type="InterPro" id="IPR003170">
    <property type="entry name" value="MurB"/>
</dbReference>
<dbReference type="InterPro" id="IPR011601">
    <property type="entry name" value="MurB_C"/>
</dbReference>
<dbReference type="InterPro" id="IPR036635">
    <property type="entry name" value="MurB_C_sf"/>
</dbReference>
<dbReference type="InterPro" id="IPR006094">
    <property type="entry name" value="Oxid_FAD_bind_N"/>
</dbReference>
<dbReference type="NCBIfam" id="TIGR00179">
    <property type="entry name" value="murB"/>
    <property type="match status" value="1"/>
</dbReference>
<dbReference type="NCBIfam" id="NF000755">
    <property type="entry name" value="PRK00046.1"/>
    <property type="match status" value="1"/>
</dbReference>
<dbReference type="NCBIfam" id="NF010478">
    <property type="entry name" value="PRK13903.1"/>
    <property type="match status" value="1"/>
</dbReference>
<dbReference type="PANTHER" id="PTHR21071">
    <property type="entry name" value="UDP-N-ACETYLENOLPYRUVOYLGLUCOSAMINE REDUCTASE"/>
    <property type="match status" value="1"/>
</dbReference>
<dbReference type="PANTHER" id="PTHR21071:SF4">
    <property type="entry name" value="UDP-N-ACETYLENOLPYRUVOYLGLUCOSAMINE REDUCTASE"/>
    <property type="match status" value="1"/>
</dbReference>
<dbReference type="Pfam" id="PF01565">
    <property type="entry name" value="FAD_binding_4"/>
    <property type="match status" value="1"/>
</dbReference>
<dbReference type="Pfam" id="PF02873">
    <property type="entry name" value="MurB_C"/>
    <property type="match status" value="1"/>
</dbReference>
<dbReference type="SUPFAM" id="SSF56176">
    <property type="entry name" value="FAD-binding/transporter-associated domain-like"/>
    <property type="match status" value="1"/>
</dbReference>
<dbReference type="SUPFAM" id="SSF56194">
    <property type="entry name" value="Uridine diphospho-N-Acetylenolpyruvylglucosamine reductase, MurB, C-terminal domain"/>
    <property type="match status" value="1"/>
</dbReference>
<dbReference type="PROSITE" id="PS51387">
    <property type="entry name" value="FAD_PCMH"/>
    <property type="match status" value="1"/>
</dbReference>
<proteinExistence type="inferred from homology"/>
<organism>
    <name type="scientific">Escherichia coli O157:H7</name>
    <dbReference type="NCBI Taxonomy" id="83334"/>
    <lineage>
        <taxon>Bacteria</taxon>
        <taxon>Pseudomonadati</taxon>
        <taxon>Pseudomonadota</taxon>
        <taxon>Gammaproteobacteria</taxon>
        <taxon>Enterobacterales</taxon>
        <taxon>Enterobacteriaceae</taxon>
        <taxon>Escherichia</taxon>
    </lineage>
</organism>
<comment type="function">
    <text evidence="2">Cell wall formation.</text>
</comment>
<comment type="catalytic activity">
    <reaction evidence="2">
        <text>UDP-N-acetyl-alpha-D-muramate + NADP(+) = UDP-N-acetyl-3-O-(1-carboxyvinyl)-alpha-D-glucosamine + NADPH + H(+)</text>
        <dbReference type="Rhea" id="RHEA:12248"/>
        <dbReference type="ChEBI" id="CHEBI:15378"/>
        <dbReference type="ChEBI" id="CHEBI:57783"/>
        <dbReference type="ChEBI" id="CHEBI:58349"/>
        <dbReference type="ChEBI" id="CHEBI:68483"/>
        <dbReference type="ChEBI" id="CHEBI:70757"/>
        <dbReference type="EC" id="1.3.1.98"/>
    </reaction>
</comment>
<comment type="cofactor">
    <cofactor evidence="2">
        <name>FAD</name>
        <dbReference type="ChEBI" id="CHEBI:57692"/>
    </cofactor>
</comment>
<comment type="pathway">
    <text evidence="2">Cell wall biogenesis; peptidoglycan biosynthesis.</text>
</comment>
<comment type="subunit">
    <text evidence="1">Monomer.</text>
</comment>
<comment type="subcellular location">
    <subcellularLocation>
        <location evidence="2">Cytoplasm</location>
    </subcellularLocation>
</comment>
<comment type="similarity">
    <text evidence="2">Belongs to the MurB family.</text>
</comment>
<reference key="1">
    <citation type="journal article" date="2001" name="Nature">
        <title>Genome sequence of enterohaemorrhagic Escherichia coli O157:H7.</title>
        <authorList>
            <person name="Perna N.T."/>
            <person name="Plunkett G. III"/>
            <person name="Burland V."/>
            <person name="Mau B."/>
            <person name="Glasner J.D."/>
            <person name="Rose D.J."/>
            <person name="Mayhew G.F."/>
            <person name="Evans P.S."/>
            <person name="Gregor J."/>
            <person name="Kirkpatrick H.A."/>
            <person name="Posfai G."/>
            <person name="Hackett J."/>
            <person name="Klink S."/>
            <person name="Boutin A."/>
            <person name="Shao Y."/>
            <person name="Miller L."/>
            <person name="Grotbeck E.J."/>
            <person name="Davis N.W."/>
            <person name="Lim A."/>
            <person name="Dimalanta E.T."/>
            <person name="Potamousis K."/>
            <person name="Apodaca J."/>
            <person name="Anantharaman T.S."/>
            <person name="Lin J."/>
            <person name="Yen G."/>
            <person name="Schwartz D.C."/>
            <person name="Welch R.A."/>
            <person name="Blattner F.R."/>
        </authorList>
    </citation>
    <scope>NUCLEOTIDE SEQUENCE [LARGE SCALE GENOMIC DNA]</scope>
    <source>
        <strain>O157:H7 / EDL933 / ATCC 700927 / EHEC</strain>
    </source>
</reference>
<reference key="2">
    <citation type="journal article" date="2001" name="DNA Res.">
        <title>Complete genome sequence of enterohemorrhagic Escherichia coli O157:H7 and genomic comparison with a laboratory strain K-12.</title>
        <authorList>
            <person name="Hayashi T."/>
            <person name="Makino K."/>
            <person name="Ohnishi M."/>
            <person name="Kurokawa K."/>
            <person name="Ishii K."/>
            <person name="Yokoyama K."/>
            <person name="Han C.-G."/>
            <person name="Ohtsubo E."/>
            <person name="Nakayama K."/>
            <person name="Murata T."/>
            <person name="Tanaka M."/>
            <person name="Tobe T."/>
            <person name="Iida T."/>
            <person name="Takami H."/>
            <person name="Honda T."/>
            <person name="Sasakawa C."/>
            <person name="Ogasawara N."/>
            <person name="Yasunaga T."/>
            <person name="Kuhara S."/>
            <person name="Shiba T."/>
            <person name="Hattori M."/>
            <person name="Shinagawa H."/>
        </authorList>
    </citation>
    <scope>NUCLEOTIDE SEQUENCE [LARGE SCALE GENOMIC DNA]</scope>
    <source>
        <strain>O157:H7 / Sakai / RIMD 0509952 / EHEC</strain>
    </source>
</reference>
<keyword id="KW-0131">Cell cycle</keyword>
<keyword id="KW-0132">Cell division</keyword>
<keyword id="KW-0133">Cell shape</keyword>
<keyword id="KW-0961">Cell wall biogenesis/degradation</keyword>
<keyword id="KW-0963">Cytoplasm</keyword>
<keyword id="KW-0274">FAD</keyword>
<keyword id="KW-0285">Flavoprotein</keyword>
<keyword id="KW-0521">NADP</keyword>
<keyword id="KW-0560">Oxidoreductase</keyword>
<keyword id="KW-0573">Peptidoglycan synthesis</keyword>
<keyword id="KW-1185">Reference proteome</keyword>
<name>MURB_ECO57</name>
<feature type="chain" id="PRO_0000179209" description="UDP-N-acetylenolpyruvoylglucosamine reductase">
    <location>
        <begin position="1"/>
        <end position="342"/>
    </location>
</feature>
<feature type="domain" description="FAD-binding PCMH-type" evidence="2">
    <location>
        <begin position="13"/>
        <end position="183"/>
    </location>
</feature>
<feature type="active site" evidence="2">
    <location>
        <position position="159"/>
    </location>
</feature>
<feature type="active site" description="Proton donor" evidence="2">
    <location>
        <position position="229"/>
    </location>
</feature>
<feature type="active site" evidence="2">
    <location>
        <position position="325"/>
    </location>
</feature>
<feature type="binding site" evidence="1">
    <location>
        <position position="190"/>
    </location>
    <ligand>
        <name>substrate</name>
    </ligand>
</feature>
<sequence>MNHSLKPWNTFGIDHNAQHIVCAEDEQQLLNAWQHATAEGQPVLILGEGSNVLFLEDYRGTVIINRIKGIEIHDEPDAWYLHVGAGENWHRLVKYTLQEGMPGLENLALIPGCVGSSPIQNIGAYGVELQRVCAYVDCVELATGKQVRLTAKECRFGYRDSIFKHEYQDRFAIVAVGLRLPKEWQPVLTYGDLTRLDPTTVTPQQVFDAVCHMRTTKLPDPKVNGNAGSFFKNPVVSAETAKALLSQFPTAPNYPQADGSVKLAAGWLIDQCQLKGMQMGGVAVHRQQALVLINEDNAKSEDVVQLAHHVRQKVGEKFNVWLEPEVRFIGASGEVSAVETIS</sequence>
<accession>Q8X711</accession>
<gene>
    <name evidence="2" type="primary">murB</name>
    <name type="ordered locus">Z5543</name>
    <name type="ordered locus">ECs4899</name>
</gene>
<protein>
    <recommendedName>
        <fullName evidence="2">UDP-N-acetylenolpyruvoylglucosamine reductase</fullName>
        <ecNumber evidence="2">1.3.1.98</ecNumber>
    </recommendedName>
    <alternativeName>
        <fullName evidence="2">UDP-N-acetylmuramate dehydrogenase</fullName>
    </alternativeName>
</protein>
<evidence type="ECO:0000250" key="1"/>
<evidence type="ECO:0000255" key="2">
    <source>
        <dbReference type="HAMAP-Rule" id="MF_00037"/>
    </source>
</evidence>